<gene>
    <name type="primary">hje</name>
    <name type="ordered locus">SSO1176</name>
</gene>
<organism>
    <name type="scientific">Saccharolobus solfataricus (strain ATCC 35092 / DSM 1617 / JCM 11322 / P2)</name>
    <name type="common">Sulfolobus solfataricus</name>
    <dbReference type="NCBI Taxonomy" id="273057"/>
    <lineage>
        <taxon>Archaea</taxon>
        <taxon>Thermoproteota</taxon>
        <taxon>Thermoprotei</taxon>
        <taxon>Sulfolobales</taxon>
        <taxon>Sulfolobaceae</taxon>
        <taxon>Saccharolobus</taxon>
    </lineage>
</organism>
<accession>Q97YX6</accession>
<dbReference type="EC" id="3.1.21.10" evidence="5"/>
<dbReference type="EMBL" id="AE006641">
    <property type="protein sequence ID" value="AAK41424.1"/>
    <property type="molecule type" value="Genomic_DNA"/>
</dbReference>
<dbReference type="PIR" id="A90271">
    <property type="entry name" value="A90271"/>
</dbReference>
<dbReference type="RefSeq" id="WP_009991563.1">
    <property type="nucleotide sequence ID" value="NC_002754.1"/>
</dbReference>
<dbReference type="PDB" id="1OB8">
    <property type="method" value="X-ray"/>
    <property type="resolution" value="1.80 A"/>
    <property type="chains" value="A/B=1-135"/>
</dbReference>
<dbReference type="PDB" id="1OB9">
    <property type="method" value="X-ray"/>
    <property type="resolution" value="2.00 A"/>
    <property type="chains" value="A=1-135"/>
</dbReference>
<dbReference type="PDBsum" id="1OB8"/>
<dbReference type="PDBsum" id="1OB9"/>
<dbReference type="SMR" id="Q97YX6"/>
<dbReference type="STRING" id="273057.SSO1176"/>
<dbReference type="PaxDb" id="273057-SSO1176"/>
<dbReference type="EnsemblBacteria" id="AAK41424">
    <property type="protein sequence ID" value="AAK41424"/>
    <property type="gene ID" value="SSO1176"/>
</dbReference>
<dbReference type="GeneID" id="44130107"/>
<dbReference type="KEGG" id="sso:SSO1176"/>
<dbReference type="PATRIC" id="fig|273057.12.peg.1169"/>
<dbReference type="eggNOG" id="arCOG00919">
    <property type="taxonomic scope" value="Archaea"/>
</dbReference>
<dbReference type="HOGENOM" id="CLU_1881165_0_0_2"/>
<dbReference type="InParanoid" id="Q97YX6"/>
<dbReference type="PhylomeDB" id="Q97YX6"/>
<dbReference type="BRENDA" id="3.1.21.10">
    <property type="organism ID" value="6163"/>
</dbReference>
<dbReference type="EvolutionaryTrace" id="Q97YX6"/>
<dbReference type="Proteomes" id="UP000001974">
    <property type="component" value="Chromosome"/>
</dbReference>
<dbReference type="GO" id="GO:0003677">
    <property type="term" value="F:DNA binding"/>
    <property type="evidence" value="ECO:0007669"/>
    <property type="project" value="UniProtKB-KW"/>
</dbReference>
<dbReference type="GO" id="GO:0004519">
    <property type="term" value="F:endonuclease activity"/>
    <property type="evidence" value="ECO:0007669"/>
    <property type="project" value="UniProtKB-KW"/>
</dbReference>
<dbReference type="GO" id="GO:0046872">
    <property type="term" value="F:metal ion binding"/>
    <property type="evidence" value="ECO:0007669"/>
    <property type="project" value="UniProtKB-KW"/>
</dbReference>
<dbReference type="GO" id="GO:0006310">
    <property type="term" value="P:DNA recombination"/>
    <property type="evidence" value="ECO:0007669"/>
    <property type="project" value="UniProtKB-KW"/>
</dbReference>
<dbReference type="GO" id="GO:0006281">
    <property type="term" value="P:DNA repair"/>
    <property type="evidence" value="ECO:0007669"/>
    <property type="project" value="UniProtKB-KW"/>
</dbReference>
<dbReference type="CDD" id="cd00523">
    <property type="entry name" value="Holliday_junction_resolvase"/>
    <property type="match status" value="1"/>
</dbReference>
<dbReference type="Gene3D" id="3.40.1350.10">
    <property type="match status" value="1"/>
</dbReference>
<dbReference type="InterPro" id="IPR002732">
    <property type="entry name" value="Hjc"/>
</dbReference>
<dbReference type="InterPro" id="IPR014428">
    <property type="entry name" value="Hjc_arc"/>
</dbReference>
<dbReference type="InterPro" id="IPR011335">
    <property type="entry name" value="Restrct_endonuc-II-like"/>
</dbReference>
<dbReference type="InterPro" id="IPR011856">
    <property type="entry name" value="tRNA_endonuc-like_dom_sf"/>
</dbReference>
<dbReference type="NCBIfam" id="NF040854">
    <property type="entry name" value="Hol_resolv_Hjc"/>
    <property type="match status" value="1"/>
</dbReference>
<dbReference type="PANTHER" id="PTHR39651">
    <property type="entry name" value="HOLLIDAY JUNCTION RESOLVASE HJC"/>
    <property type="match status" value="1"/>
</dbReference>
<dbReference type="PANTHER" id="PTHR39651:SF1">
    <property type="entry name" value="HOLLIDAY JUNCTION RESOLVASE HJC"/>
    <property type="match status" value="1"/>
</dbReference>
<dbReference type="Pfam" id="PF01870">
    <property type="entry name" value="Hjc"/>
    <property type="match status" value="1"/>
</dbReference>
<dbReference type="PIRSF" id="PIRSF004985">
    <property type="entry name" value="Hlld_jn_rslvs_ar"/>
    <property type="match status" value="1"/>
</dbReference>
<dbReference type="SUPFAM" id="SSF52980">
    <property type="entry name" value="Restriction endonuclease-like"/>
    <property type="match status" value="1"/>
</dbReference>
<proteinExistence type="evidence at protein level"/>
<evidence type="ECO:0000255" key="1"/>
<evidence type="ECO:0000269" key="2">
    <source>
    </source>
</evidence>
<evidence type="ECO:0000269" key="3">
    <source>
    </source>
</evidence>
<evidence type="ECO:0000269" key="4">
    <source>
    </source>
</evidence>
<evidence type="ECO:0000269" key="5">
    <source>
    </source>
</evidence>
<evidence type="ECO:0000303" key="6">
    <source>
    </source>
</evidence>
<evidence type="ECO:0000305" key="7"/>
<evidence type="ECO:0007829" key="8">
    <source>
        <dbReference type="PDB" id="1OB8"/>
    </source>
</evidence>
<evidence type="ECO:0007829" key="9">
    <source>
        <dbReference type="PDB" id="1OB9"/>
    </source>
</evidence>
<feature type="chain" id="PRO_0000429159" description="Crossover junction endodeoxyribonuclease Hje">
    <location>
        <begin position="1"/>
        <end position="135"/>
    </location>
</feature>
<feature type="binding site" evidence="1">
    <location>
        <position position="10"/>
    </location>
    <ligand>
        <name>Mg(2+)</name>
        <dbReference type="ChEBI" id="CHEBI:18420"/>
    </ligand>
</feature>
<feature type="binding site" evidence="1">
    <location>
        <position position="39"/>
    </location>
    <ligand>
        <name>Mg(2+)</name>
        <dbReference type="ChEBI" id="CHEBI:18420"/>
    </ligand>
</feature>
<feature type="binding site" evidence="1">
    <location>
        <position position="52"/>
    </location>
    <ligand>
        <name>Mg(2+)</name>
        <dbReference type="ChEBI" id="CHEBI:18420"/>
    </ligand>
</feature>
<feature type="site" description="Transition state stabilizer" evidence="1">
    <location>
        <position position="54"/>
    </location>
</feature>
<feature type="mutagenesis site" description="100- to 1000-fold reduction in kcat." evidence="4">
    <original>S</original>
    <variation>A</variation>
    <variation>C</variation>
    <variation>T</variation>
    <location>
        <position position="30"/>
    </location>
</feature>
<feature type="helix" evidence="8">
    <location>
        <begin position="7"/>
        <end position="19"/>
    </location>
</feature>
<feature type="strand" evidence="8">
    <location>
        <begin position="23"/>
        <end position="26"/>
    </location>
</feature>
<feature type="strand" evidence="9">
    <location>
        <begin position="32"/>
        <end position="35"/>
    </location>
</feature>
<feature type="strand" evidence="8">
    <location>
        <begin position="39"/>
        <end position="44"/>
    </location>
</feature>
<feature type="strand" evidence="8">
    <location>
        <begin position="47"/>
        <end position="63"/>
    </location>
</feature>
<feature type="helix" evidence="8">
    <location>
        <begin position="65"/>
        <end position="76"/>
    </location>
</feature>
<feature type="strand" evidence="8">
    <location>
        <begin position="78"/>
        <end position="90"/>
    </location>
</feature>
<feature type="helix" evidence="8">
    <location>
        <begin position="91"/>
        <end position="93"/>
    </location>
</feature>
<feature type="strand" evidence="8">
    <location>
        <begin position="95"/>
        <end position="99"/>
    </location>
</feature>
<feature type="strand" evidence="8">
    <location>
        <begin position="102"/>
        <end position="105"/>
    </location>
</feature>
<feature type="strand" evidence="8">
    <location>
        <begin position="107"/>
        <end position="110"/>
    </location>
</feature>
<feature type="turn" evidence="8">
    <location>
        <begin position="111"/>
        <end position="113"/>
    </location>
</feature>
<feature type="strand" evidence="8">
    <location>
        <begin position="114"/>
        <end position="116"/>
    </location>
</feature>
<feature type="helix" evidence="8">
    <location>
        <begin position="117"/>
        <end position="128"/>
    </location>
</feature>
<keyword id="KW-0002">3D-structure</keyword>
<keyword id="KW-0227">DNA damage</keyword>
<keyword id="KW-0233">DNA recombination</keyword>
<keyword id="KW-0234">DNA repair</keyword>
<keyword id="KW-0238">DNA-binding</keyword>
<keyword id="KW-0255">Endonuclease</keyword>
<keyword id="KW-0378">Hydrolase</keyword>
<keyword id="KW-0460">Magnesium</keyword>
<keyword id="KW-0479">Metal-binding</keyword>
<keyword id="KW-0540">Nuclease</keyword>
<keyword id="KW-1185">Reference proteome</keyword>
<sequence length="135" mass="15452">MNRDIGKNAERELVSILRGEGFNAVRIPTSNSSPNPLPDIFATKGNTLLSIECKSTWENKVKVKEHQVRKLLDFLSMFTMKGVPLIAIKFKQVHEWRVLVPEKAEDIIVTIDNSIPIEDLFKILEKRIEEKILTP</sequence>
<protein>
    <recommendedName>
        <fullName evidence="7">Crossover junction endodeoxyribonuclease Hje</fullName>
        <shortName evidence="6">Hje</shortName>
        <ecNumber evidence="5">3.1.21.10</ecNumber>
    </recommendedName>
    <alternativeName>
        <fullName evidence="6">Holliday junction resolvase Hje</fullName>
    </alternativeName>
</protein>
<comment type="function">
    <text evidence="2 3 5">A structure-specific endonuclease that resolves Holliday junction (HJ) intermediates during genetic recombination. Acts only on 4-way DNA junctions in a sequence non-specific manner; introduces paired nicks in opposing strands 2 bases 3' of the point of strand exchange only on continuous strands of 4-way junction DNA. Cleaves both mobile and immobile junctions.</text>
</comment>
<comment type="catalytic activity">
    <reaction evidence="5">
        <text>Endonucleolytic cleavage at a junction such as a reciprocal single-stranded crossover between two homologous DNA duplexes (Holliday junction).</text>
        <dbReference type="EC" id="3.1.21.10"/>
    </reaction>
</comment>
<comment type="cofactor">
    <cofactor evidence="2 5">
        <name>Mg(2+)</name>
        <dbReference type="ChEBI" id="CHEBI:18420"/>
    </cofactor>
    <text evidence="2 5">Binds 1 Mg(2+) ion per subunit.</text>
</comment>
<comment type="biophysicochemical properties">
    <kinetics>
        <KM evidence="2 5">73 nM for 4-way junction DNA at 5 mM MgCl2</KM>
        <KM evidence="2 5">66 nM for 4-way junction DNA at 15 mM MgCl2</KM>
        <text>kcat is 4.8 min(-1) and 10 min(-1) at 5 mM and 15 mM MgCl2 respectively.</text>
    </kinetics>
    <temperatureDependence>
        <text evidence="2 5">Optimum temperature is 60 degrees Celsius. Could be higher with a more thermally stable substrate.</text>
    </temperatureDependence>
</comment>
<comment type="subunit">
    <text evidence="4">Homodimer.</text>
</comment>
<comment type="miscellaneous">
    <text evidence="3">A second Holliday junction resolving enzyme, Hjc, with different substrate specificity exists in this organism.</text>
</comment>
<comment type="similarity">
    <text evidence="7">Belongs to the Holliday junction resolvase Hjc family. Hje subfamily.</text>
</comment>
<name>HJE_SACS2</name>
<reference key="1">
    <citation type="journal article" date="2001" name="Proc. Natl. Acad. Sci. U.S.A.">
        <title>The complete genome of the crenarchaeon Sulfolobus solfataricus P2.</title>
        <authorList>
            <person name="She Q."/>
            <person name="Singh R.K."/>
            <person name="Confalonieri F."/>
            <person name="Zivanovic Y."/>
            <person name="Allard G."/>
            <person name="Awayez M.J."/>
            <person name="Chan-Weiher C.C.-Y."/>
            <person name="Clausen I.G."/>
            <person name="Curtis B.A."/>
            <person name="De Moors A."/>
            <person name="Erauso G."/>
            <person name="Fletcher C."/>
            <person name="Gordon P.M.K."/>
            <person name="Heikamp-de Jong I."/>
            <person name="Jeffries A.C."/>
            <person name="Kozera C.J."/>
            <person name="Medina N."/>
            <person name="Peng X."/>
            <person name="Thi-Ngoc H.P."/>
            <person name="Redder P."/>
            <person name="Schenk M.E."/>
            <person name="Theriault C."/>
            <person name="Tolstrup N."/>
            <person name="Charlebois R.L."/>
            <person name="Doolittle W.F."/>
            <person name="Duguet M."/>
            <person name="Gaasterland T."/>
            <person name="Garrett R.A."/>
            <person name="Ragan M.A."/>
            <person name="Sensen C.W."/>
            <person name="Van der Oost J."/>
        </authorList>
    </citation>
    <scope>NUCLEOTIDE SEQUENCE [LARGE SCALE GENOMIC DNA]</scope>
    <source>
        <strain>ATCC 35092 / DSM 1617 / JCM 11322 / P2</strain>
    </source>
</reference>
<reference key="2">
    <citation type="journal article" date="2000" name="J. Mol. Biol.">
        <title>An archaeal Holliday junction resolving enzyme from Sulfolobus solfataricus exhibits unique properties.</title>
        <authorList>
            <person name="Kvaratskhelia M."/>
            <person name="White M.F."/>
        </authorList>
    </citation>
    <scope>FUNCTION</scope>
    <scope>COFACTOR</scope>
    <scope>BIOPHYSICOCHEMICAL PROPERTIES</scope>
    <source>
        <strain>DSM 5833 / MT-4</strain>
    </source>
</reference>
<reference key="3">
    <citation type="journal article" date="2000" name="J. Mol. Biol.">
        <title>Two Holliday junction resolving enzymes in Sulfolobus solfataricus.</title>
        <authorList>
            <person name="Kvaratskhelia M."/>
            <person name="White M.F."/>
        </authorList>
    </citation>
    <scope>FUNCTION</scope>
    <source>
        <strain>ATCC 35092 / DSM 1617 / JCM 11322 / P2</strain>
    </source>
</reference>
<reference key="4">
    <citation type="journal article" date="2005" name="J. Mol. Biol.">
        <title>The endonuclease Hje catalyses rapid, multiple turnover resolution of Holliday junctions.</title>
        <authorList>
            <person name="Parker J.L."/>
            <person name="White M.F."/>
        </authorList>
    </citation>
    <scope>FUNCTION</scope>
    <scope>CATALYTIC ACTIVITY</scope>
    <scope>COFACTOR</scope>
    <scope>BIOPHYSICOCHEMICAL PROPERTIES</scope>
    <source>
        <strain>ATCC 35092 / DSM 1617 / JCM 11322 / P2</strain>
    </source>
</reference>
<reference key="5">
    <citation type="journal article" date="2003" name="Acta Crystallogr. D">
        <title>Crystallization and preliminary X-ray diffraction studies of Hje, a HolliDay junction resolving enzyme from Sulfolobus solfataricus.</title>
        <authorList>
            <person name="Middleton C.L."/>
            <person name="Parker J.L."/>
            <person name="Richard D.J."/>
            <person name="White M.F."/>
            <person name="Bond C.S."/>
        </authorList>
    </citation>
    <scope>PRELIMINARY CRYSTALLIZATION</scope>
    <source>
        <strain>ATCC 35092 / DSM 1617 / JCM 11322 / P2</strain>
    </source>
</reference>
<reference key="6">
    <citation type="journal article" date="2004" name="Nucleic Acids Res.">
        <title>Substrate recognition and catalysis by the Holliday junction resolving enzyme Hje.</title>
        <authorList>
            <person name="Middleton C.L."/>
            <person name="Parker J.L."/>
            <person name="Richard D.J."/>
            <person name="White M.F."/>
            <person name="Bond C.S."/>
        </authorList>
    </citation>
    <scope>X-RAY CRYSTALLOGRAPHY (1.80 ANGSTROMS)</scope>
    <scope>SUBUNIT</scope>
    <scope>MUTAGENESIS OF SER-30</scope>
    <source>
        <strain>ATCC 35092 / DSM 1617 / JCM 11322 / P2</strain>
    </source>
</reference>